<proteinExistence type="evidence at protein level"/>
<sequence>MKLPIYLDYSATTPVDPRVAQKMCECLTMEGNFGNPASRSHVFGWKAEEAVENARRQVAELVNADPREIVWTSGATESDNLAIKGVAHFNASKGKHIITSKIEHKAVLDTTRQLEREGFEVTYLEPGEDGLITPAMVAAALREDTILVSVMHVNNEIGTVNDIAAIGELTRSRGVLYHVDAAQSTGKVAIDLERMKVDLMSFSAHKTYGPKGIGALYVRRKPRVRLEAQMHGGGHERGMRSGTLATHQIVGMGEAFRIAREEMAAESRRIAGLSHRFHEQVSTLEEVYLNGSATARVPHNLNLSFNYVEGESLIMSLRDLAVSSGSACTSASLEPSYVLRALGRNDELAHSSIRFTFGRFTTEEEVDYAARKVCEAVGKLRELSPLWDMYKDGVDLSKIEWQAH</sequence>
<name>ISCS_AZOVI</name>
<comment type="function">
    <text evidence="2 3 4">Master enzyme that delivers sulfur to a number of partners involved in Fe-S cluster assembly, tRNA modification or cofactor biosynthesis. Catalyzes the removal of elemental sulfur from cysteine to produce alanine via an enzyme-bound persulfide intermediate. Functions as a sulfur delivery protein for Fe-S cluster synthesis. Cluster assembly on IscU homodimers proceeds sequentially from 1 2Fe-2S per dimer, to 2 2Fe-2S per dimer and finally 1 4Fe-4S per dimer.</text>
</comment>
<comment type="catalytic activity">
    <reaction evidence="1 3">
        <text>(sulfur carrier)-H + L-cysteine = (sulfur carrier)-SH + L-alanine</text>
        <dbReference type="Rhea" id="RHEA:43892"/>
        <dbReference type="Rhea" id="RHEA-COMP:14737"/>
        <dbReference type="Rhea" id="RHEA-COMP:14739"/>
        <dbReference type="ChEBI" id="CHEBI:29917"/>
        <dbReference type="ChEBI" id="CHEBI:35235"/>
        <dbReference type="ChEBI" id="CHEBI:57972"/>
        <dbReference type="ChEBI" id="CHEBI:64428"/>
        <dbReference type="EC" id="2.8.1.7"/>
    </reaction>
</comment>
<comment type="cofactor">
    <cofactor evidence="1 3">
        <name>pyridoxal 5'-phosphate</name>
        <dbReference type="ChEBI" id="CHEBI:597326"/>
    </cofactor>
</comment>
<comment type="activity regulation">
    <text evidence="3">Inhibited by equimolar N-iodoacetyl-N'-(5-sulfo-1-naphthyl)ethylenediamine.</text>
</comment>
<comment type="pathway">
    <text evidence="1 7">Cofactor biosynthesis; iron-sulfur cluster biosynthesis.</text>
</comment>
<comment type="subunit">
    <text evidence="1 2 3 4">Homodimer. Forms a heterotetramer with IscU, probably interacts with other sulfur acceptors.</text>
</comment>
<comment type="interaction">
    <interactant intactId="EBI-15710417">
        <id>O31269</id>
    </interactant>
    <interactant intactId="EBI-15710405">
        <id>O31270</id>
        <label>iscU</label>
    </interactant>
    <organismsDiffer>false</organismsDiffer>
    <experiments>3</experiments>
</comment>
<comment type="subcellular location">
    <subcellularLocation>
        <location evidence="1">Cytoplasm</location>
    </subcellularLocation>
</comment>
<comment type="disruption phenotype">
    <text evidence="3">Essential, it cannot be deleted.</text>
</comment>
<comment type="similarity">
    <text evidence="1">Belongs to the class-V pyridoxal-phosphate-dependent aminotransferase family. NifS/IscS subfamily.</text>
</comment>
<gene>
    <name evidence="1" type="primary">iscS</name>
</gene>
<evidence type="ECO:0000255" key="1">
    <source>
        <dbReference type="HAMAP-Rule" id="MF_00331"/>
    </source>
</evidence>
<evidence type="ECO:0000269" key="2">
    <source>
    </source>
</evidence>
<evidence type="ECO:0000269" key="3">
    <source>
    </source>
</evidence>
<evidence type="ECO:0000269" key="4">
    <source ref="2"/>
</evidence>
<evidence type="ECO:0000303" key="5">
    <source>
    </source>
</evidence>
<evidence type="ECO:0000305" key="6"/>
<evidence type="ECO:0000305" key="7">
    <source ref="2"/>
</evidence>
<dbReference type="EC" id="2.8.1.7" evidence="1 3"/>
<dbReference type="EMBL" id="AF010139">
    <property type="protein sequence ID" value="AAC24472.1"/>
    <property type="molecule type" value="Genomic_DNA"/>
</dbReference>
<dbReference type="PIR" id="T44281">
    <property type="entry name" value="T44281"/>
</dbReference>
<dbReference type="SMR" id="O31269"/>
<dbReference type="DIP" id="DIP-46129N"/>
<dbReference type="IntAct" id="O31269">
    <property type="interactions" value="1"/>
</dbReference>
<dbReference type="UniPathway" id="UPA00266"/>
<dbReference type="GO" id="GO:1990221">
    <property type="term" value="C:L-cysteine desulfurase complex"/>
    <property type="evidence" value="ECO:0007669"/>
    <property type="project" value="UniProtKB-ARBA"/>
</dbReference>
<dbReference type="GO" id="GO:0051537">
    <property type="term" value="F:2 iron, 2 sulfur cluster binding"/>
    <property type="evidence" value="ECO:0007669"/>
    <property type="project" value="UniProtKB-UniRule"/>
</dbReference>
<dbReference type="GO" id="GO:0031071">
    <property type="term" value="F:cysteine desulfurase activity"/>
    <property type="evidence" value="ECO:0007669"/>
    <property type="project" value="UniProtKB-UniRule"/>
</dbReference>
<dbReference type="GO" id="GO:0046872">
    <property type="term" value="F:metal ion binding"/>
    <property type="evidence" value="ECO:0007669"/>
    <property type="project" value="UniProtKB-KW"/>
</dbReference>
<dbReference type="GO" id="GO:0030170">
    <property type="term" value="F:pyridoxal phosphate binding"/>
    <property type="evidence" value="ECO:0007669"/>
    <property type="project" value="UniProtKB-UniRule"/>
</dbReference>
<dbReference type="GO" id="GO:0044571">
    <property type="term" value="P:[2Fe-2S] cluster assembly"/>
    <property type="evidence" value="ECO:0007669"/>
    <property type="project" value="UniProtKB-UniRule"/>
</dbReference>
<dbReference type="GO" id="GO:0008033">
    <property type="term" value="P:tRNA processing"/>
    <property type="evidence" value="ECO:0007669"/>
    <property type="project" value="UniProtKB-KW"/>
</dbReference>
<dbReference type="FunFam" id="3.40.640.10:FF:000003">
    <property type="entry name" value="Cysteine desulfurase IscS"/>
    <property type="match status" value="1"/>
</dbReference>
<dbReference type="FunFam" id="3.90.1150.10:FF:000002">
    <property type="entry name" value="Cysteine desulfurase IscS"/>
    <property type="match status" value="1"/>
</dbReference>
<dbReference type="Gene3D" id="3.90.1150.10">
    <property type="entry name" value="Aspartate Aminotransferase, domain 1"/>
    <property type="match status" value="1"/>
</dbReference>
<dbReference type="Gene3D" id="3.40.640.10">
    <property type="entry name" value="Type I PLP-dependent aspartate aminotransferase-like (Major domain)"/>
    <property type="match status" value="1"/>
</dbReference>
<dbReference type="HAMAP" id="MF_00331">
    <property type="entry name" value="Cys_desulf_IscS"/>
    <property type="match status" value="1"/>
</dbReference>
<dbReference type="InterPro" id="IPR000192">
    <property type="entry name" value="Aminotrans_V_dom"/>
</dbReference>
<dbReference type="InterPro" id="IPR020578">
    <property type="entry name" value="Aminotrans_V_PyrdxlP_BS"/>
</dbReference>
<dbReference type="InterPro" id="IPR010240">
    <property type="entry name" value="Cys_deSase_IscS"/>
</dbReference>
<dbReference type="InterPro" id="IPR016454">
    <property type="entry name" value="Cysteine_dSase"/>
</dbReference>
<dbReference type="InterPro" id="IPR015424">
    <property type="entry name" value="PyrdxlP-dep_Trfase"/>
</dbReference>
<dbReference type="InterPro" id="IPR015421">
    <property type="entry name" value="PyrdxlP-dep_Trfase_major"/>
</dbReference>
<dbReference type="InterPro" id="IPR015422">
    <property type="entry name" value="PyrdxlP-dep_Trfase_small"/>
</dbReference>
<dbReference type="NCBIfam" id="TIGR02006">
    <property type="entry name" value="IscS"/>
    <property type="match status" value="1"/>
</dbReference>
<dbReference type="NCBIfam" id="NF010611">
    <property type="entry name" value="PRK14012.1"/>
    <property type="match status" value="1"/>
</dbReference>
<dbReference type="PANTHER" id="PTHR11601:SF34">
    <property type="entry name" value="CYSTEINE DESULFURASE"/>
    <property type="match status" value="1"/>
</dbReference>
<dbReference type="PANTHER" id="PTHR11601">
    <property type="entry name" value="CYSTEINE DESULFURYLASE FAMILY MEMBER"/>
    <property type="match status" value="1"/>
</dbReference>
<dbReference type="Pfam" id="PF00266">
    <property type="entry name" value="Aminotran_5"/>
    <property type="match status" value="1"/>
</dbReference>
<dbReference type="PIRSF" id="PIRSF005572">
    <property type="entry name" value="NifS"/>
    <property type="match status" value="1"/>
</dbReference>
<dbReference type="SUPFAM" id="SSF53383">
    <property type="entry name" value="PLP-dependent transferases"/>
    <property type="match status" value="1"/>
</dbReference>
<dbReference type="PROSITE" id="PS00595">
    <property type="entry name" value="AA_TRANSFER_CLASS_5"/>
    <property type="match status" value="1"/>
</dbReference>
<accession>O31269</accession>
<protein>
    <recommendedName>
        <fullName evidence="1 5">Cysteine desulfurase IscS</fullName>
        <ecNumber evidence="1 3">2.8.1.7</ecNumber>
    </recommendedName>
</protein>
<keyword id="KW-0001">2Fe-2S</keyword>
<keyword id="KW-0963">Cytoplasm</keyword>
<keyword id="KW-0903">Direct protein sequencing</keyword>
<keyword id="KW-0408">Iron</keyword>
<keyword id="KW-0411">Iron-sulfur</keyword>
<keyword id="KW-0479">Metal-binding</keyword>
<keyword id="KW-0663">Pyridoxal phosphate</keyword>
<keyword id="KW-0808">Transferase</keyword>
<keyword id="KW-0819">tRNA processing</keyword>
<organism>
    <name type="scientific">Azotobacter vinelandii</name>
    <dbReference type="NCBI Taxonomy" id="354"/>
    <lineage>
        <taxon>Bacteria</taxon>
        <taxon>Pseudomonadati</taxon>
        <taxon>Pseudomonadota</taxon>
        <taxon>Gammaproteobacteria</taxon>
        <taxon>Pseudomonadales</taxon>
        <taxon>Pseudomonadaceae</taxon>
        <taxon>Azotobacter</taxon>
    </lineage>
</organism>
<feature type="initiator methionine" description="Removed" evidence="3">
    <location>
        <position position="1"/>
    </location>
</feature>
<feature type="chain" id="PRO_0000150260" description="Cysteine desulfurase IscS">
    <location>
        <begin position="2"/>
        <end position="404"/>
    </location>
</feature>
<feature type="active site" description="Cysteine persulfide intermediate" evidence="1 6">
    <location>
        <position position="328"/>
    </location>
</feature>
<feature type="binding site" evidence="1">
    <location>
        <begin position="75"/>
        <end position="76"/>
    </location>
    <ligand>
        <name>pyridoxal 5'-phosphate</name>
        <dbReference type="ChEBI" id="CHEBI:597326"/>
    </ligand>
</feature>
<feature type="binding site" evidence="1">
    <location>
        <position position="155"/>
    </location>
    <ligand>
        <name>pyridoxal 5'-phosphate</name>
        <dbReference type="ChEBI" id="CHEBI:597326"/>
    </ligand>
</feature>
<feature type="binding site" evidence="1">
    <location>
        <position position="183"/>
    </location>
    <ligand>
        <name>pyridoxal 5'-phosphate</name>
        <dbReference type="ChEBI" id="CHEBI:597326"/>
    </ligand>
</feature>
<feature type="binding site" evidence="1">
    <location>
        <begin position="203"/>
        <end position="205"/>
    </location>
    <ligand>
        <name>pyridoxal 5'-phosphate</name>
        <dbReference type="ChEBI" id="CHEBI:597326"/>
    </ligand>
</feature>
<feature type="binding site" evidence="1">
    <location>
        <position position="243"/>
    </location>
    <ligand>
        <name>pyridoxal 5'-phosphate</name>
        <dbReference type="ChEBI" id="CHEBI:597326"/>
    </ligand>
</feature>
<feature type="binding site" description="via persulfide group" evidence="1">
    <location>
        <position position="328"/>
    </location>
    <ligand>
        <name>[2Fe-2S] cluster</name>
        <dbReference type="ChEBI" id="CHEBI:190135"/>
        <note>ligand shared with IscU</note>
    </ligand>
</feature>
<feature type="modified residue" description="N6-(pyridoxal phosphate)lysine" evidence="1 6">
    <location>
        <position position="206"/>
    </location>
</feature>
<reference key="1">
    <citation type="journal article" date="1998" name="J. Biol. Chem.">
        <title>Assembly of iron-sulfur clusters. Identification of an iscSUA-hscBA-fdx gene cluster from Azotobacter vinelandii.</title>
        <authorList>
            <person name="Zheng L."/>
            <person name="Cash V.L."/>
            <person name="Flint D.H."/>
            <person name="Dean D.R."/>
        </authorList>
    </citation>
    <scope>NUCLEOTIDE SEQUENCE [GENOMIC DNA]</scope>
    <scope>PROTEIN SEQUENCE OF 2-23; 3-18; 241-257; 319-340 AND 382-391</scope>
    <scope>FUNCTION</scope>
    <scope>CATALYTIC ACTIVITY</scope>
    <scope>COFACTOR</scope>
    <scope>ACTIVITY REGULATION</scope>
    <scope>SUBUNIT</scope>
    <scope>DISRUPTION PHENOTYPE</scope>
    <source>
        <strain>ATCC 13705 / OP1 / DSM 366 / NCIMB 11614 / LMG 3878 / UW</strain>
    </source>
</reference>
<reference key="2">
    <citation type="journal article" date="2000" name="J. Am. Chem. Soc.">
        <title>Role of the iscU protein in iron-sulfur cluster biosynthesis: IscS-mediated assembly of a [Fe2S2] cluster in IscU.</title>
        <authorList>
            <person name="Agar J.N."/>
            <person name="Zheng L."/>
            <person name="Cash V.L."/>
            <person name="Dean D.R."/>
            <person name="Johnson M.K."/>
        </authorList>
    </citation>
    <scope>FUNCTION</scope>
    <scope>INTERACTION WITH ISCU</scope>
    <scope>SUBUNIT</scope>
    <scope>PATHWAY</scope>
    <scope>REACTION MECHANISM</scope>
    <source>
        <strain>ATCC 13705 / OP1 / DSM 366 / NCIMB 11614 / LMG 3878 / UW</strain>
    </source>
</reference>
<reference key="3">
    <citation type="journal article" date="2000" name="Biochemistry">
        <title>IscU as a scaffold for iron-sulfur cluster biosynthesis: sequential assembly of [2Fe-2S] and [4Fe-4S] clusters in IscU.</title>
        <authorList>
            <person name="Agar J.N."/>
            <person name="Krebs C."/>
            <person name="Frazzon J."/>
            <person name="Huynh B.H."/>
            <person name="Dean D.R."/>
            <person name="Johnson M.K."/>
        </authorList>
    </citation>
    <scope>FUNCTION IN FE-S CLUSTER FORMATION</scope>
    <scope>REACTION MECHANISM</scope>
    <scope>SUBUNIT</scope>
    <source>
        <strain>ATCC 13705 / OP1 / DSM 366 / NCIMB 11614 / LMG 3878 / UW</strain>
    </source>
</reference>